<gene>
    <name evidence="1" type="primary">murD</name>
    <name type="ordered locus">VF_2203</name>
</gene>
<feature type="chain" id="PRO_0000109120" description="UDP-N-acetylmuramoylalanine--D-glutamate ligase">
    <location>
        <begin position="1"/>
        <end position="440"/>
    </location>
</feature>
<feature type="binding site" evidence="1">
    <location>
        <begin position="115"/>
        <end position="121"/>
    </location>
    <ligand>
        <name>ATP</name>
        <dbReference type="ChEBI" id="CHEBI:30616"/>
    </ligand>
</feature>
<proteinExistence type="inferred from homology"/>
<comment type="function">
    <text evidence="1">Cell wall formation. Catalyzes the addition of glutamate to the nucleotide precursor UDP-N-acetylmuramoyl-L-alanine (UMA).</text>
</comment>
<comment type="catalytic activity">
    <reaction evidence="1">
        <text>UDP-N-acetyl-alpha-D-muramoyl-L-alanine + D-glutamate + ATP = UDP-N-acetyl-alpha-D-muramoyl-L-alanyl-D-glutamate + ADP + phosphate + H(+)</text>
        <dbReference type="Rhea" id="RHEA:16429"/>
        <dbReference type="ChEBI" id="CHEBI:15378"/>
        <dbReference type="ChEBI" id="CHEBI:29986"/>
        <dbReference type="ChEBI" id="CHEBI:30616"/>
        <dbReference type="ChEBI" id="CHEBI:43474"/>
        <dbReference type="ChEBI" id="CHEBI:83898"/>
        <dbReference type="ChEBI" id="CHEBI:83900"/>
        <dbReference type="ChEBI" id="CHEBI:456216"/>
        <dbReference type="EC" id="6.3.2.9"/>
    </reaction>
</comment>
<comment type="pathway">
    <text evidence="1">Cell wall biogenesis; peptidoglycan biosynthesis.</text>
</comment>
<comment type="subcellular location">
    <subcellularLocation>
        <location evidence="1">Cytoplasm</location>
    </subcellularLocation>
</comment>
<comment type="similarity">
    <text evidence="1">Belongs to the MurCDEF family.</text>
</comment>
<comment type="sequence caution" evidence="2">
    <conflict type="frameshift">
        <sequence resource="EMBL-CDS" id="AAW86698"/>
    </conflict>
</comment>
<accession>Q5E2P8</accession>
<keyword id="KW-0067">ATP-binding</keyword>
<keyword id="KW-0131">Cell cycle</keyword>
<keyword id="KW-0132">Cell division</keyword>
<keyword id="KW-0133">Cell shape</keyword>
<keyword id="KW-0961">Cell wall biogenesis/degradation</keyword>
<keyword id="KW-0963">Cytoplasm</keyword>
<keyword id="KW-0436">Ligase</keyword>
<keyword id="KW-0547">Nucleotide-binding</keyword>
<keyword id="KW-0573">Peptidoglycan synthesis</keyword>
<keyword id="KW-1185">Reference proteome</keyword>
<sequence>MSGFGGVKNVVVVGLGMTGLSVVKHLLKTTISLTIKVIDTRDTPPGHDQLPENVELHSGGWQQDWLINADLIVTNPGIALASPQLKPAIDKGIKIVGDIELFAWAVNAPVIAITGSNGKSTVTDLTGEMAKAAGVKTAVGGNIGFAALDLLEQDAELYVLELSSFQLETTSTLKLKAAAFLNLSEDHMDRYQGMADYRQAKLRIFEHAEVCIVNRDDKQTYPDVEKTLKSFGFDQGDYGCIEKDGIEYLAKNTVPLLAANELGLVGKHNIANSLVAIALLDAAGINLDATLDTLRTYNGLTHRCQVVADNNGIRWVNDSKATNVASTLAALSGLQLEGKLHLLVGGVGKGADFSELSPALHDLNLMMYCFGEDGDQFVSLDPRSLLCETMNEAIATLYPTLNKGDMVMLSPACASFDQYANFMARGDAFTQLAKQYSIES</sequence>
<protein>
    <recommendedName>
        <fullName evidence="1">UDP-N-acetylmuramoylalanine--D-glutamate ligase</fullName>
        <ecNumber evidence="1">6.3.2.9</ecNumber>
    </recommendedName>
    <alternativeName>
        <fullName evidence="1">D-glutamic acid-adding enzyme</fullName>
    </alternativeName>
    <alternativeName>
        <fullName evidence="1">UDP-N-acetylmuramoyl-L-alanyl-D-glutamate synthetase</fullName>
    </alternativeName>
</protein>
<evidence type="ECO:0000255" key="1">
    <source>
        <dbReference type="HAMAP-Rule" id="MF_00639"/>
    </source>
</evidence>
<evidence type="ECO:0000305" key="2"/>
<organism>
    <name type="scientific">Aliivibrio fischeri (strain ATCC 700601 / ES114)</name>
    <name type="common">Vibrio fischeri</name>
    <dbReference type="NCBI Taxonomy" id="312309"/>
    <lineage>
        <taxon>Bacteria</taxon>
        <taxon>Pseudomonadati</taxon>
        <taxon>Pseudomonadota</taxon>
        <taxon>Gammaproteobacteria</taxon>
        <taxon>Vibrionales</taxon>
        <taxon>Vibrionaceae</taxon>
        <taxon>Aliivibrio</taxon>
    </lineage>
</organism>
<name>MURD_ALIF1</name>
<reference key="1">
    <citation type="journal article" date="2005" name="Proc. Natl. Acad. Sci. U.S.A.">
        <title>Complete genome sequence of Vibrio fischeri: a symbiotic bacterium with pathogenic congeners.</title>
        <authorList>
            <person name="Ruby E.G."/>
            <person name="Urbanowski M."/>
            <person name="Campbell J."/>
            <person name="Dunn A."/>
            <person name="Faini M."/>
            <person name="Gunsalus R."/>
            <person name="Lostroh P."/>
            <person name="Lupp C."/>
            <person name="McCann J."/>
            <person name="Millikan D."/>
            <person name="Schaefer A."/>
            <person name="Stabb E."/>
            <person name="Stevens A."/>
            <person name="Visick K."/>
            <person name="Whistler C."/>
            <person name="Greenberg E.P."/>
        </authorList>
    </citation>
    <scope>NUCLEOTIDE SEQUENCE [LARGE SCALE GENOMIC DNA]</scope>
    <source>
        <strain>ATCC 700601 / ES114</strain>
    </source>
</reference>
<dbReference type="EC" id="6.3.2.9" evidence="1"/>
<dbReference type="EMBL" id="CP000020">
    <property type="protein sequence ID" value="AAW86698.1"/>
    <property type="status" value="ALT_FRAME"/>
    <property type="molecule type" value="Genomic_DNA"/>
</dbReference>
<dbReference type="RefSeq" id="YP_205586.1">
    <property type="nucleotide sequence ID" value="NC_006840.2"/>
</dbReference>
<dbReference type="SMR" id="Q5E2P8"/>
<dbReference type="STRING" id="312309.VF_2203"/>
<dbReference type="EnsemblBacteria" id="AAW86698">
    <property type="protein sequence ID" value="AAW86698"/>
    <property type="gene ID" value="VF_2203"/>
</dbReference>
<dbReference type="KEGG" id="vfi:VF_2203"/>
<dbReference type="PATRIC" id="fig|312309.11.peg.2242"/>
<dbReference type="eggNOG" id="COG0771">
    <property type="taxonomic scope" value="Bacteria"/>
</dbReference>
<dbReference type="HOGENOM" id="CLU_032540_1_0_6"/>
<dbReference type="OrthoDB" id="9809796at2"/>
<dbReference type="UniPathway" id="UPA00219"/>
<dbReference type="Proteomes" id="UP000000537">
    <property type="component" value="Chromosome I"/>
</dbReference>
<dbReference type="GO" id="GO:0005737">
    <property type="term" value="C:cytoplasm"/>
    <property type="evidence" value="ECO:0007669"/>
    <property type="project" value="UniProtKB-SubCell"/>
</dbReference>
<dbReference type="GO" id="GO:0005524">
    <property type="term" value="F:ATP binding"/>
    <property type="evidence" value="ECO:0007669"/>
    <property type="project" value="UniProtKB-UniRule"/>
</dbReference>
<dbReference type="GO" id="GO:0008764">
    <property type="term" value="F:UDP-N-acetylmuramoylalanine-D-glutamate ligase activity"/>
    <property type="evidence" value="ECO:0007669"/>
    <property type="project" value="UniProtKB-UniRule"/>
</dbReference>
<dbReference type="GO" id="GO:0051301">
    <property type="term" value="P:cell division"/>
    <property type="evidence" value="ECO:0007669"/>
    <property type="project" value="UniProtKB-KW"/>
</dbReference>
<dbReference type="GO" id="GO:0071555">
    <property type="term" value="P:cell wall organization"/>
    <property type="evidence" value="ECO:0007669"/>
    <property type="project" value="UniProtKB-KW"/>
</dbReference>
<dbReference type="GO" id="GO:0009252">
    <property type="term" value="P:peptidoglycan biosynthetic process"/>
    <property type="evidence" value="ECO:0007669"/>
    <property type="project" value="UniProtKB-UniRule"/>
</dbReference>
<dbReference type="GO" id="GO:0008360">
    <property type="term" value="P:regulation of cell shape"/>
    <property type="evidence" value="ECO:0007669"/>
    <property type="project" value="UniProtKB-KW"/>
</dbReference>
<dbReference type="Gene3D" id="3.90.190.20">
    <property type="entry name" value="Mur ligase, C-terminal domain"/>
    <property type="match status" value="1"/>
</dbReference>
<dbReference type="Gene3D" id="3.40.1190.10">
    <property type="entry name" value="Mur-like, catalytic domain"/>
    <property type="match status" value="1"/>
</dbReference>
<dbReference type="Gene3D" id="3.40.50.720">
    <property type="entry name" value="NAD(P)-binding Rossmann-like Domain"/>
    <property type="match status" value="1"/>
</dbReference>
<dbReference type="HAMAP" id="MF_00639">
    <property type="entry name" value="MurD"/>
    <property type="match status" value="1"/>
</dbReference>
<dbReference type="InterPro" id="IPR036565">
    <property type="entry name" value="Mur-like_cat_sf"/>
</dbReference>
<dbReference type="InterPro" id="IPR004101">
    <property type="entry name" value="Mur_ligase_C"/>
</dbReference>
<dbReference type="InterPro" id="IPR036615">
    <property type="entry name" value="Mur_ligase_C_dom_sf"/>
</dbReference>
<dbReference type="InterPro" id="IPR013221">
    <property type="entry name" value="Mur_ligase_cen"/>
</dbReference>
<dbReference type="InterPro" id="IPR005762">
    <property type="entry name" value="MurD"/>
</dbReference>
<dbReference type="NCBIfam" id="TIGR01087">
    <property type="entry name" value="murD"/>
    <property type="match status" value="1"/>
</dbReference>
<dbReference type="PANTHER" id="PTHR43692">
    <property type="entry name" value="UDP-N-ACETYLMURAMOYLALANINE--D-GLUTAMATE LIGASE"/>
    <property type="match status" value="1"/>
</dbReference>
<dbReference type="PANTHER" id="PTHR43692:SF1">
    <property type="entry name" value="UDP-N-ACETYLMURAMOYLALANINE--D-GLUTAMATE LIGASE"/>
    <property type="match status" value="1"/>
</dbReference>
<dbReference type="Pfam" id="PF02875">
    <property type="entry name" value="Mur_ligase_C"/>
    <property type="match status" value="1"/>
</dbReference>
<dbReference type="Pfam" id="PF08245">
    <property type="entry name" value="Mur_ligase_M"/>
    <property type="match status" value="1"/>
</dbReference>
<dbReference type="Pfam" id="PF21799">
    <property type="entry name" value="MurD-like_N"/>
    <property type="match status" value="1"/>
</dbReference>
<dbReference type="SUPFAM" id="SSF51984">
    <property type="entry name" value="MurCD N-terminal domain"/>
    <property type="match status" value="1"/>
</dbReference>
<dbReference type="SUPFAM" id="SSF53623">
    <property type="entry name" value="MurD-like peptide ligases, catalytic domain"/>
    <property type="match status" value="1"/>
</dbReference>
<dbReference type="SUPFAM" id="SSF53244">
    <property type="entry name" value="MurD-like peptide ligases, peptide-binding domain"/>
    <property type="match status" value="1"/>
</dbReference>